<proteinExistence type="inferred from homology"/>
<reference key="1">
    <citation type="submission" date="2007-07" db="EMBL/GenBank/DDBJ databases">
        <title>Complete sequence of chromosome of Xanthobacter autotrophicus Py2.</title>
        <authorList>
            <consortium name="US DOE Joint Genome Institute"/>
            <person name="Copeland A."/>
            <person name="Lucas S."/>
            <person name="Lapidus A."/>
            <person name="Barry K."/>
            <person name="Glavina del Rio T."/>
            <person name="Hammon N."/>
            <person name="Israni S."/>
            <person name="Dalin E."/>
            <person name="Tice H."/>
            <person name="Pitluck S."/>
            <person name="Sims D."/>
            <person name="Brettin T."/>
            <person name="Bruce D."/>
            <person name="Detter J.C."/>
            <person name="Han C."/>
            <person name="Tapia R."/>
            <person name="Brainard J."/>
            <person name="Schmutz J."/>
            <person name="Larimer F."/>
            <person name="Land M."/>
            <person name="Hauser L."/>
            <person name="Kyrpides N."/>
            <person name="Kim E."/>
            <person name="Ensigns S.A."/>
            <person name="Richardson P."/>
        </authorList>
    </citation>
    <scope>NUCLEOTIDE SEQUENCE [LARGE SCALE GENOMIC DNA]</scope>
    <source>
        <strain>ATCC BAA-1158 / Py2</strain>
    </source>
</reference>
<comment type="function">
    <text evidence="1">Required for maturation of 30S ribosomal subunits.</text>
</comment>
<comment type="subcellular location">
    <subcellularLocation>
        <location evidence="1">Cytoplasm</location>
    </subcellularLocation>
</comment>
<comment type="similarity">
    <text evidence="1">Belongs to the RimP family.</text>
</comment>
<dbReference type="EMBL" id="CP000781">
    <property type="protein sequence ID" value="ABS65554.1"/>
    <property type="molecule type" value="Genomic_DNA"/>
</dbReference>
<dbReference type="SMR" id="A7IC11"/>
<dbReference type="STRING" id="78245.Xaut_0296"/>
<dbReference type="KEGG" id="xau:Xaut_0296"/>
<dbReference type="eggNOG" id="COG0779">
    <property type="taxonomic scope" value="Bacteria"/>
</dbReference>
<dbReference type="HOGENOM" id="CLU_070525_0_0_5"/>
<dbReference type="OrthoDB" id="9805006at2"/>
<dbReference type="PhylomeDB" id="A7IC11"/>
<dbReference type="Proteomes" id="UP000002417">
    <property type="component" value="Chromosome"/>
</dbReference>
<dbReference type="GO" id="GO:0005829">
    <property type="term" value="C:cytosol"/>
    <property type="evidence" value="ECO:0007669"/>
    <property type="project" value="TreeGrafter"/>
</dbReference>
<dbReference type="GO" id="GO:0000028">
    <property type="term" value="P:ribosomal small subunit assembly"/>
    <property type="evidence" value="ECO:0007669"/>
    <property type="project" value="TreeGrafter"/>
</dbReference>
<dbReference type="GO" id="GO:0006412">
    <property type="term" value="P:translation"/>
    <property type="evidence" value="ECO:0007669"/>
    <property type="project" value="TreeGrafter"/>
</dbReference>
<dbReference type="CDD" id="cd01734">
    <property type="entry name" value="YlxS_C"/>
    <property type="match status" value="1"/>
</dbReference>
<dbReference type="Gene3D" id="2.30.30.180">
    <property type="entry name" value="Ribosome maturation factor RimP, C-terminal domain"/>
    <property type="match status" value="1"/>
</dbReference>
<dbReference type="Gene3D" id="3.30.300.70">
    <property type="entry name" value="RimP-like superfamily, N-terminal"/>
    <property type="match status" value="1"/>
</dbReference>
<dbReference type="HAMAP" id="MF_01077">
    <property type="entry name" value="RimP"/>
    <property type="match status" value="1"/>
</dbReference>
<dbReference type="InterPro" id="IPR003728">
    <property type="entry name" value="Ribosome_maturation_RimP"/>
</dbReference>
<dbReference type="InterPro" id="IPR028998">
    <property type="entry name" value="RimP_C"/>
</dbReference>
<dbReference type="InterPro" id="IPR036847">
    <property type="entry name" value="RimP_C_sf"/>
</dbReference>
<dbReference type="InterPro" id="IPR028989">
    <property type="entry name" value="RimP_N"/>
</dbReference>
<dbReference type="InterPro" id="IPR035956">
    <property type="entry name" value="RimP_N_sf"/>
</dbReference>
<dbReference type="NCBIfam" id="NF000932">
    <property type="entry name" value="PRK00092.2-5"/>
    <property type="match status" value="1"/>
</dbReference>
<dbReference type="PANTHER" id="PTHR33867">
    <property type="entry name" value="RIBOSOME MATURATION FACTOR RIMP"/>
    <property type="match status" value="1"/>
</dbReference>
<dbReference type="PANTHER" id="PTHR33867:SF1">
    <property type="entry name" value="RIBOSOME MATURATION FACTOR RIMP"/>
    <property type="match status" value="1"/>
</dbReference>
<dbReference type="Pfam" id="PF17384">
    <property type="entry name" value="DUF150_C"/>
    <property type="match status" value="1"/>
</dbReference>
<dbReference type="Pfam" id="PF02576">
    <property type="entry name" value="RimP_N"/>
    <property type="match status" value="1"/>
</dbReference>
<dbReference type="SUPFAM" id="SSF74942">
    <property type="entry name" value="YhbC-like, C-terminal domain"/>
    <property type="match status" value="1"/>
</dbReference>
<dbReference type="SUPFAM" id="SSF75420">
    <property type="entry name" value="YhbC-like, N-terminal domain"/>
    <property type="match status" value="1"/>
</dbReference>
<accession>A7IC11</accession>
<keyword id="KW-0963">Cytoplasm</keyword>
<keyword id="KW-1185">Reference proteome</keyword>
<keyword id="KW-0690">Ribosome biogenesis</keyword>
<feature type="chain" id="PRO_0000384805" description="Ribosome maturation factor RimP">
    <location>
        <begin position="1"/>
        <end position="286"/>
    </location>
</feature>
<feature type="region of interest" description="Disordered" evidence="2">
    <location>
        <begin position="200"/>
        <end position="286"/>
    </location>
</feature>
<feature type="compositionally biased region" description="Acidic residues" evidence="2">
    <location>
        <begin position="200"/>
        <end position="224"/>
    </location>
</feature>
<feature type="compositionally biased region" description="Basic residues" evidence="2">
    <location>
        <begin position="248"/>
        <end position="267"/>
    </location>
</feature>
<feature type="compositionally biased region" description="Polar residues" evidence="2">
    <location>
        <begin position="273"/>
        <end position="286"/>
    </location>
</feature>
<evidence type="ECO:0000255" key="1">
    <source>
        <dbReference type="HAMAP-Rule" id="MF_01077"/>
    </source>
</evidence>
<evidence type="ECO:0000256" key="2">
    <source>
        <dbReference type="SAM" id="MobiDB-lite"/>
    </source>
</evidence>
<sequence length="286" mass="30212">MTEIQAVLDDPNEPRLITETGVAARVAAIASGVLGALGYRLVRVKVTNRDGGTLQIMAERPDGTMSIDDCEAASRALSPVLDVEDPISSAYRLEMSSPGIDRPLVRQSDFVRWAGHEVKVEMARPVDGRKRFRGILIGAEDGIAVVRRLDAPATEEPTVRLPVADIHDAKLMLTDALIREALRAAKAAGQAIDEEAEAFLDGEDGDDTGVDAGDPDQDDADDALAEATAQPAAPYKGPSRKDGGNKLVGRKAKGKKASPKKSNAKKKAGLETAASSANASTVKETH</sequence>
<gene>
    <name evidence="1" type="primary">rimP</name>
    <name type="ordered locus">Xaut_0296</name>
</gene>
<name>RIMP_XANP2</name>
<organism>
    <name type="scientific">Xanthobacter autotrophicus (strain ATCC BAA-1158 / Py2)</name>
    <dbReference type="NCBI Taxonomy" id="78245"/>
    <lineage>
        <taxon>Bacteria</taxon>
        <taxon>Pseudomonadati</taxon>
        <taxon>Pseudomonadota</taxon>
        <taxon>Alphaproteobacteria</taxon>
        <taxon>Hyphomicrobiales</taxon>
        <taxon>Xanthobacteraceae</taxon>
        <taxon>Xanthobacter</taxon>
    </lineage>
</organism>
<protein>
    <recommendedName>
        <fullName evidence="1">Ribosome maturation factor RimP</fullName>
    </recommendedName>
</protein>